<protein>
    <recommendedName>
        <fullName evidence="1">Phosphoglycerate kinase</fullName>
        <ecNumber evidence="1">2.7.2.3</ecNumber>
    </recommendedName>
</protein>
<evidence type="ECO:0000255" key="1">
    <source>
        <dbReference type="HAMAP-Rule" id="MF_00145"/>
    </source>
</evidence>
<name>PGK_NITV2</name>
<organism>
    <name type="scientific">Nitratidesulfovibrio vulgaris (strain ATCC 29579 / DSM 644 / CCUG 34227 / NCIMB 8303 / VKM B-1760 / Hildenborough)</name>
    <name type="common">Desulfovibrio vulgaris</name>
    <dbReference type="NCBI Taxonomy" id="882"/>
    <lineage>
        <taxon>Bacteria</taxon>
        <taxon>Pseudomonadati</taxon>
        <taxon>Thermodesulfobacteriota</taxon>
        <taxon>Desulfovibrionia</taxon>
        <taxon>Desulfovibrionales</taxon>
        <taxon>Desulfovibrionaceae</taxon>
        <taxon>Nitratidesulfovibrio</taxon>
    </lineage>
</organism>
<reference key="1">
    <citation type="journal article" date="2004" name="Nat. Biotechnol.">
        <title>The genome sequence of the anaerobic, sulfate-reducing bacterium Desulfovibrio vulgaris Hildenborough.</title>
        <authorList>
            <person name="Heidelberg J.F."/>
            <person name="Seshadri R."/>
            <person name="Haveman S.A."/>
            <person name="Hemme C.L."/>
            <person name="Paulsen I.T."/>
            <person name="Kolonay J.F."/>
            <person name="Eisen J.A."/>
            <person name="Ward N.L."/>
            <person name="Methe B.A."/>
            <person name="Brinkac L.M."/>
            <person name="Daugherty S.C."/>
            <person name="DeBoy R.T."/>
            <person name="Dodson R.J."/>
            <person name="Durkin A.S."/>
            <person name="Madupu R."/>
            <person name="Nelson W.C."/>
            <person name="Sullivan S.A."/>
            <person name="Fouts D.E."/>
            <person name="Haft D.H."/>
            <person name="Selengut J."/>
            <person name="Peterson J.D."/>
            <person name="Davidsen T.M."/>
            <person name="Zafar N."/>
            <person name="Zhou L."/>
            <person name="Radune D."/>
            <person name="Dimitrov G."/>
            <person name="Hance M."/>
            <person name="Tran K."/>
            <person name="Khouri H.M."/>
            <person name="Gill J."/>
            <person name="Utterback T.R."/>
            <person name="Feldblyum T.V."/>
            <person name="Wall J.D."/>
            <person name="Voordouw G."/>
            <person name="Fraser C.M."/>
        </authorList>
    </citation>
    <scope>NUCLEOTIDE SEQUENCE [LARGE SCALE GENOMIC DNA]</scope>
    <source>
        <strain>ATCC 29579 / DSM 644 / CCUG 34227 / NCIMB 8303 / VKM B-1760 / Hildenborough</strain>
    </source>
</reference>
<accession>P62412</accession>
<feature type="chain" id="PRO_0000145940" description="Phosphoglycerate kinase">
    <location>
        <begin position="1"/>
        <end position="393"/>
    </location>
</feature>
<feature type="binding site" evidence="1">
    <location>
        <begin position="21"/>
        <end position="23"/>
    </location>
    <ligand>
        <name>substrate</name>
    </ligand>
</feature>
<feature type="binding site" evidence="1">
    <location>
        <position position="36"/>
    </location>
    <ligand>
        <name>substrate</name>
    </ligand>
</feature>
<feature type="binding site" evidence="1">
    <location>
        <begin position="59"/>
        <end position="62"/>
    </location>
    <ligand>
        <name>substrate</name>
    </ligand>
</feature>
<feature type="binding site" evidence="1">
    <location>
        <position position="113"/>
    </location>
    <ligand>
        <name>substrate</name>
    </ligand>
</feature>
<feature type="binding site" evidence="1">
    <location>
        <position position="146"/>
    </location>
    <ligand>
        <name>substrate</name>
    </ligand>
</feature>
<feature type="binding site" evidence="1">
    <location>
        <position position="197"/>
    </location>
    <ligand>
        <name>ATP</name>
        <dbReference type="ChEBI" id="CHEBI:30616"/>
    </ligand>
</feature>
<feature type="binding site" evidence="1">
    <location>
        <position position="319"/>
    </location>
    <ligand>
        <name>ATP</name>
        <dbReference type="ChEBI" id="CHEBI:30616"/>
    </ligand>
</feature>
<feature type="binding site" evidence="1">
    <location>
        <begin position="345"/>
        <end position="348"/>
    </location>
    <ligand>
        <name>ATP</name>
        <dbReference type="ChEBI" id="CHEBI:30616"/>
    </ligand>
</feature>
<sequence>MAVIKMTDLDLKGKRVLLREDLNVPLKEGRITSDKRIRAALPSIRMAMEAGARVLIVSHLGRPVEGEFDEAFSLAPVAAHLSRELGRDVRLVKDYIDGVDVAEGDCVLCENVRFLKGEKKNTEELGRRLAALCDIFVMDAFGAAHRAQASTHAVARFAPVACAGPLLAAELDALERALDAPKHPLVGIIGGSKVSTKLTLLDNLSHRVDRLIVGGGIANNFIKAAGYEVGKSLYEPELVEEAARLMAAARAAGGEIPVPLDVVVGPELADGAPATVRKVSEVGPDEMILDIGPATATRYREILLAAGTIVWNGPVGAFEWEQFGAGTRALCEAVADSPAFSIAGGGDTVAAVEKYGVASRVGYISTGGGAFLEFLEGKELPAVAILQERAAQS</sequence>
<proteinExistence type="inferred from homology"/>
<gene>
    <name evidence="1" type="primary">pgk</name>
    <name type="ordered locus">DVU_2529</name>
</gene>
<keyword id="KW-0067">ATP-binding</keyword>
<keyword id="KW-0963">Cytoplasm</keyword>
<keyword id="KW-0324">Glycolysis</keyword>
<keyword id="KW-0418">Kinase</keyword>
<keyword id="KW-0547">Nucleotide-binding</keyword>
<keyword id="KW-1185">Reference proteome</keyword>
<keyword id="KW-0808">Transferase</keyword>
<dbReference type="EC" id="2.7.2.3" evidence="1"/>
<dbReference type="EMBL" id="AE017285">
    <property type="protein sequence ID" value="AAS97001.1"/>
    <property type="molecule type" value="Genomic_DNA"/>
</dbReference>
<dbReference type="RefSeq" id="WP_010939799.1">
    <property type="nucleotide sequence ID" value="NC_002937.3"/>
</dbReference>
<dbReference type="RefSeq" id="YP_011741.1">
    <property type="nucleotide sequence ID" value="NC_002937.3"/>
</dbReference>
<dbReference type="SMR" id="P62412"/>
<dbReference type="STRING" id="882.DVU_2529"/>
<dbReference type="PaxDb" id="882-DVU_2529"/>
<dbReference type="EnsemblBacteria" id="AAS97001">
    <property type="protein sequence ID" value="AAS97001"/>
    <property type="gene ID" value="DVU_2529"/>
</dbReference>
<dbReference type="KEGG" id="dvu:DVU_2529"/>
<dbReference type="PATRIC" id="fig|882.5.peg.2287"/>
<dbReference type="eggNOG" id="COG0126">
    <property type="taxonomic scope" value="Bacteria"/>
</dbReference>
<dbReference type="HOGENOM" id="CLU_025427_0_2_7"/>
<dbReference type="OrthoDB" id="9808460at2"/>
<dbReference type="PhylomeDB" id="P62412"/>
<dbReference type="UniPathway" id="UPA00109">
    <property type="reaction ID" value="UER00185"/>
</dbReference>
<dbReference type="Proteomes" id="UP000002194">
    <property type="component" value="Chromosome"/>
</dbReference>
<dbReference type="GO" id="GO:0005829">
    <property type="term" value="C:cytosol"/>
    <property type="evidence" value="ECO:0007669"/>
    <property type="project" value="TreeGrafter"/>
</dbReference>
<dbReference type="GO" id="GO:0043531">
    <property type="term" value="F:ADP binding"/>
    <property type="evidence" value="ECO:0007669"/>
    <property type="project" value="TreeGrafter"/>
</dbReference>
<dbReference type="GO" id="GO:0005524">
    <property type="term" value="F:ATP binding"/>
    <property type="evidence" value="ECO:0007669"/>
    <property type="project" value="UniProtKB-KW"/>
</dbReference>
<dbReference type="GO" id="GO:0004618">
    <property type="term" value="F:phosphoglycerate kinase activity"/>
    <property type="evidence" value="ECO:0007669"/>
    <property type="project" value="UniProtKB-UniRule"/>
</dbReference>
<dbReference type="GO" id="GO:0006094">
    <property type="term" value="P:gluconeogenesis"/>
    <property type="evidence" value="ECO:0007669"/>
    <property type="project" value="TreeGrafter"/>
</dbReference>
<dbReference type="GO" id="GO:0006096">
    <property type="term" value="P:glycolytic process"/>
    <property type="evidence" value="ECO:0007669"/>
    <property type="project" value="UniProtKB-UniRule"/>
</dbReference>
<dbReference type="FunFam" id="3.40.50.1260:FF:000001">
    <property type="entry name" value="Phosphoglycerate kinase"/>
    <property type="match status" value="1"/>
</dbReference>
<dbReference type="FunFam" id="3.40.50.1260:FF:000002">
    <property type="entry name" value="Phosphoglycerate kinase"/>
    <property type="match status" value="1"/>
</dbReference>
<dbReference type="Gene3D" id="3.40.50.1260">
    <property type="entry name" value="Phosphoglycerate kinase, N-terminal domain"/>
    <property type="match status" value="2"/>
</dbReference>
<dbReference type="HAMAP" id="MF_00145">
    <property type="entry name" value="Phosphoglyc_kinase"/>
    <property type="match status" value="1"/>
</dbReference>
<dbReference type="InterPro" id="IPR001576">
    <property type="entry name" value="Phosphoglycerate_kinase"/>
</dbReference>
<dbReference type="InterPro" id="IPR015911">
    <property type="entry name" value="Phosphoglycerate_kinase_CS"/>
</dbReference>
<dbReference type="InterPro" id="IPR015824">
    <property type="entry name" value="Phosphoglycerate_kinase_N"/>
</dbReference>
<dbReference type="InterPro" id="IPR036043">
    <property type="entry name" value="Phosphoglycerate_kinase_sf"/>
</dbReference>
<dbReference type="PANTHER" id="PTHR11406">
    <property type="entry name" value="PHOSPHOGLYCERATE KINASE"/>
    <property type="match status" value="1"/>
</dbReference>
<dbReference type="PANTHER" id="PTHR11406:SF23">
    <property type="entry name" value="PHOSPHOGLYCERATE KINASE 1, CHLOROPLASTIC-RELATED"/>
    <property type="match status" value="1"/>
</dbReference>
<dbReference type="Pfam" id="PF00162">
    <property type="entry name" value="PGK"/>
    <property type="match status" value="1"/>
</dbReference>
<dbReference type="PIRSF" id="PIRSF000724">
    <property type="entry name" value="Pgk"/>
    <property type="match status" value="1"/>
</dbReference>
<dbReference type="PRINTS" id="PR00477">
    <property type="entry name" value="PHGLYCKINASE"/>
</dbReference>
<dbReference type="SUPFAM" id="SSF53748">
    <property type="entry name" value="Phosphoglycerate kinase"/>
    <property type="match status" value="1"/>
</dbReference>
<dbReference type="PROSITE" id="PS00111">
    <property type="entry name" value="PGLYCERATE_KINASE"/>
    <property type="match status" value="1"/>
</dbReference>
<comment type="catalytic activity">
    <reaction evidence="1">
        <text>(2R)-3-phosphoglycerate + ATP = (2R)-3-phospho-glyceroyl phosphate + ADP</text>
        <dbReference type="Rhea" id="RHEA:14801"/>
        <dbReference type="ChEBI" id="CHEBI:30616"/>
        <dbReference type="ChEBI" id="CHEBI:57604"/>
        <dbReference type="ChEBI" id="CHEBI:58272"/>
        <dbReference type="ChEBI" id="CHEBI:456216"/>
        <dbReference type="EC" id="2.7.2.3"/>
    </reaction>
</comment>
<comment type="pathway">
    <text evidence="1">Carbohydrate degradation; glycolysis; pyruvate from D-glyceraldehyde 3-phosphate: step 2/5.</text>
</comment>
<comment type="subunit">
    <text evidence="1">Monomer.</text>
</comment>
<comment type="subcellular location">
    <subcellularLocation>
        <location evidence="1">Cytoplasm</location>
    </subcellularLocation>
</comment>
<comment type="similarity">
    <text evidence="1">Belongs to the phosphoglycerate kinase family.</text>
</comment>